<gene>
    <name evidence="1" type="primary">M</name>
</gene>
<feature type="chain" id="PRO_0000078874" description="Matrix protein 1">
    <location>
        <begin position="1"/>
        <end position="248"/>
    </location>
</feature>
<feature type="region of interest" description="Membrane-binding" evidence="1">
    <location>
        <begin position="1"/>
        <end position="164"/>
    </location>
</feature>
<feature type="region of interest" description="RNP-binding" evidence="1">
    <location>
        <begin position="165"/>
        <end position="248"/>
    </location>
</feature>
<feature type="short sequence motif" description="Nuclear localization signal" evidence="1">
    <location>
        <begin position="101"/>
        <end position="105"/>
    </location>
</feature>
<name>M1_INBSI</name>
<organism>
    <name type="scientific">Influenza B virus (strain B/Singapore/222/1979)</name>
    <dbReference type="NCBI Taxonomy" id="107417"/>
    <lineage>
        <taxon>Viruses</taxon>
        <taxon>Riboviria</taxon>
        <taxon>Orthornavirae</taxon>
        <taxon>Negarnaviricota</taxon>
        <taxon>Polyploviricotina</taxon>
        <taxon>Insthoviricetes</taxon>
        <taxon>Articulavirales</taxon>
        <taxon>Orthomyxoviridae</taxon>
        <taxon>Betainfluenzavirus</taxon>
        <taxon>Betainfluenzavirus influenzae</taxon>
        <taxon>Influenza B virus</taxon>
    </lineage>
</organism>
<sequence>MSLFGDTIAYLLSLTEDGEGKAELAEKLHCWFGGKEFDLDSALEWIKNKRCLTDIQKALIGASICFLKPKDQERKRRFITEPLSGMGTTATKKKGLILAERKMRRCVSFHEAFEIAEGHESSALLYCLMVMYLNRGNYSMQVKLGTLCALCEKQASHSHRAHSRAARSSVPGVRREMQMVSAMNTAKTMNGMGKGEDVQKLAEELQSNIGVLRSLGASQKNGEGIAKDVMEVLKQSSMGNSALVKKYL</sequence>
<evidence type="ECO:0000255" key="1">
    <source>
        <dbReference type="HAMAP-Rule" id="MF_04068"/>
    </source>
</evidence>
<comment type="function">
    <text evidence="1">Plays critical roles in virus replication, from virus entry and uncoating to assembly and budding of the virus particle. M1 binding to ribonucleocapsids (RNPs) in nucleus seems to inhibit viral transcription. Interaction of viral NEP with M1-RNP is thought to promote nuclear export of the complex, which is targeted to the virion assembly site at the apical plasma membrane in polarized epithelial cells. Interactions with NA and HA may bring M1, a non-raft-associated protein, into lipid rafts. Forms a continuous shell on the inner side of the lipid bilayer in virion, where it binds the RNP. During virus entry into cell, the M2 ion channel acidifies the internal virion core, inducing M1 dissociation from the RNP. M1-free RNPs are transported to the nucleus, where viral transcription and replication can take place.</text>
</comment>
<comment type="function">
    <text evidence="1">Determines the virion's shape: spherical or filamentous. Clinical isolates of influenza are characterized by the presence of significant proportion of filamentous virions, whereas after multiple passage on eggs or cell culture, virions have only spherical morphology. Filamentous virions are thought to be important to infect neighboring cells, and spherical virions more suited to spread through aerosol between hosts organisms.</text>
</comment>
<comment type="subunit">
    <text evidence="1">Homodimer and homomultimer. Interacts with NEP. Binds ribonucleocapsid by both interacting with genomic RNA and NP protein. May interact with HA and NA. Cannot bind NP without genomic RNA.</text>
</comment>
<comment type="subcellular location">
    <subcellularLocation>
        <location evidence="1">Virion membrane</location>
        <topology evidence="1">Peripheral membrane protein</topology>
        <orientation evidence="1">Cytoplasmic side</orientation>
    </subcellularLocation>
    <subcellularLocation>
        <location evidence="1">Host nucleus</location>
    </subcellularLocation>
</comment>
<comment type="miscellaneous">
    <text>Influenza B virus genome RNA segment 7 encodes the M1 and BM2 (AC P08383) proteins. Normal translation produces the M1 protein. The M1 termination codon overlaps the BM2 initiation codon in an overlapping stop-start pentanucleotide 5'-UAAUG-3'. Termination of M1 translation triggers reinitiation on the BM2 AUG in the +2 open reading frame.</text>
</comment>
<comment type="miscellaneous">
    <text evidence="1">Most abundant protein in virion. When expressed alone can form virus-like particles in transfected cells.</text>
</comment>
<comment type="similarity">
    <text evidence="1">Belongs to the influenza viruses Matrix protein M1 family.</text>
</comment>
<organismHost>
    <name type="scientific">Homo sapiens</name>
    <name type="common">Human</name>
    <dbReference type="NCBI Taxonomy" id="9606"/>
</organismHost>
<protein>
    <recommendedName>
        <fullName evidence="1">Matrix protein 1</fullName>
        <shortName evidence="1">M1</shortName>
    </recommendedName>
</protein>
<accession>P06816</accession>
<dbReference type="EMBL" id="M14909">
    <property type="protein sequence ID" value="AAA67100.1"/>
    <property type="molecule type" value="Genomic_RNA"/>
</dbReference>
<dbReference type="PIR" id="A25619">
    <property type="entry name" value="MFIVB1"/>
</dbReference>
<dbReference type="SMR" id="P06816"/>
<dbReference type="Proteomes" id="UP000137758">
    <property type="component" value="Genome"/>
</dbReference>
<dbReference type="GO" id="GO:0042025">
    <property type="term" value="C:host cell nucleus"/>
    <property type="evidence" value="ECO:0007669"/>
    <property type="project" value="UniProtKB-SubCell"/>
</dbReference>
<dbReference type="GO" id="GO:0016020">
    <property type="term" value="C:membrane"/>
    <property type="evidence" value="ECO:0007669"/>
    <property type="project" value="UniProtKB-KW"/>
</dbReference>
<dbReference type="GO" id="GO:0055036">
    <property type="term" value="C:virion membrane"/>
    <property type="evidence" value="ECO:0007669"/>
    <property type="project" value="UniProtKB-SubCell"/>
</dbReference>
<dbReference type="GO" id="GO:0003723">
    <property type="term" value="F:RNA binding"/>
    <property type="evidence" value="ECO:0007669"/>
    <property type="project" value="UniProtKB-UniRule"/>
</dbReference>
<dbReference type="GO" id="GO:0039660">
    <property type="term" value="F:structural constituent of virion"/>
    <property type="evidence" value="ECO:0007669"/>
    <property type="project" value="UniProtKB-UniRule"/>
</dbReference>
<dbReference type="GO" id="GO:0046761">
    <property type="term" value="P:viral budding from plasma membrane"/>
    <property type="evidence" value="ECO:0007669"/>
    <property type="project" value="UniProtKB-UniRule"/>
</dbReference>
<dbReference type="Gene3D" id="1.10.10.180">
    <property type="match status" value="1"/>
</dbReference>
<dbReference type="Gene3D" id="1.20.91.10">
    <property type="match status" value="1"/>
</dbReference>
<dbReference type="HAMAP" id="MF_04068">
    <property type="entry name" value="INFV_M1"/>
    <property type="match status" value="1"/>
</dbReference>
<dbReference type="InterPro" id="IPR036039">
    <property type="entry name" value="Flu_matrix_M1"/>
</dbReference>
<dbReference type="InterPro" id="IPR013188">
    <property type="entry name" value="Flu_matrix_M1_C"/>
</dbReference>
<dbReference type="InterPro" id="IPR001561">
    <property type="entry name" value="Flu_matrix_M1_N"/>
</dbReference>
<dbReference type="InterPro" id="IPR015423">
    <property type="entry name" value="Flu_matrix_M1_N_sub1"/>
</dbReference>
<dbReference type="InterPro" id="IPR015799">
    <property type="entry name" value="Flu_matrix_M1_N_sub2"/>
</dbReference>
<dbReference type="InterPro" id="IPR037533">
    <property type="entry name" value="INFV_M1"/>
</dbReference>
<dbReference type="Pfam" id="PF00598">
    <property type="entry name" value="Flu_M1"/>
    <property type="match status" value="1"/>
</dbReference>
<dbReference type="Pfam" id="PF08289">
    <property type="entry name" value="Flu_M1_C"/>
    <property type="match status" value="1"/>
</dbReference>
<dbReference type="SMART" id="SM00759">
    <property type="entry name" value="Flu_M1_C"/>
    <property type="match status" value="1"/>
</dbReference>
<dbReference type="SUPFAM" id="SSF48145">
    <property type="entry name" value="Influenza virus matrix protein M1"/>
    <property type="match status" value="1"/>
</dbReference>
<proteinExistence type="inferred from homology"/>
<reference key="1">
    <citation type="journal article" date="1986" name="Virology">
        <title>Nucleotide sequence of RNA segment 7 of influenza B/Singapore/222/79: maintenance of a second large open reading frame.</title>
        <authorList>
            <person name="Hiebert S.W."/>
            <person name="Williams M.A."/>
            <person name="Lamb R.A."/>
        </authorList>
    </citation>
    <scope>NUCLEOTIDE SEQUENCE [GENOMIC RNA]</scope>
</reference>
<keyword id="KW-1048">Host nucleus</keyword>
<keyword id="KW-0472">Membrane</keyword>
<keyword id="KW-0694">RNA-binding</keyword>
<keyword id="KW-0468">Viral matrix protein</keyword>
<keyword id="KW-0946">Virion</keyword>